<accession>Q47N06</accession>
<evidence type="ECO:0000250" key="1">
    <source>
        <dbReference type="UniProtKB" id="Q9KG76"/>
    </source>
</evidence>
<evidence type="ECO:0000255" key="2"/>
<evidence type="ECO:0000255" key="3">
    <source>
        <dbReference type="PROSITE-ProRule" id="PRU00648"/>
    </source>
</evidence>
<evidence type="ECO:0000255" key="4">
    <source>
        <dbReference type="PROSITE-ProRule" id="PRU01352"/>
    </source>
</evidence>
<evidence type="ECO:0000269" key="5">
    <source>
    </source>
</evidence>
<evidence type="ECO:0000269" key="6">
    <source>
    </source>
</evidence>
<evidence type="ECO:0000303" key="7">
    <source>
    </source>
</evidence>
<evidence type="ECO:0000305" key="8"/>
<evidence type="ECO:0000312" key="9">
    <source>
        <dbReference type="EMBL" id="AAZ56163.1"/>
    </source>
</evidence>
<sequence>MSHASRRRWRRATTSAATAALLCGALLTFPSAPAAAQVRLGSGSYTTVLPPGASGPSDHTGAPVAPKVTADFTQPVVTNDWWSSLIFQRYPGNPYGENLYAHPLSFKAQAHGLEVGYPDTPELVADGLKYQYTHSPDFVLGIHGLNAPAAKVAGYSDWTVTADLSDGTRQLRTTIGQGLPFVYADVSGGPIRVEFTAPPTVWRRSGNAVGVTVNGHHYALFAPSGTTWSESDTVFTADVGGSGYASVALLPSPDDFDRYAPYAYSFVTSTTLTYDYDPASATLTSTYRVTTEAREGTAQGTLLALYPHQWKETTTALTDLSYASPRGPMRVVEGDRFTTELTTHGILPSLPTVDSADHQRLRALIDAELHASDPWKGASDTYWTGKALGRLAQLVPIADSIGYTAGRDALLDLLKNKMEDWLTADGPGDNAQFYYDDQWDTLIGFPASFGSNTELNDHDFHYGYFITAAATIARYDRSWISEERWGPMVTTVLRDANNPDRDDERFPWLRSFSPYAGHGWASGHAGFASGNNQESSSEAMHFAASAALLGSLIGDEELRDLGVYLHTTQASAMRRYWQNADGDAFPAGYSHDVVGMVWSDGGDHRIWWDGTPEELYGINYLPITAGSLYLGHDPEHAAAMHQSLVTRLGRQPQVWRDIHWAHQALSDPDAALAAFEAQWQSYEPESGSSKAHTYQWLSTLAEFGTVDTSVTADTPHYAVFRDGDRRTYVAFNPTGQPLTVTFSDGTTLTVPPGQLATG</sequence>
<gene>
    <name evidence="7" type="primary">Lam81A</name>
    <name evidence="9" type="ordered locus">Tfu_2130</name>
</gene>
<proteinExistence type="evidence at protein level"/>
<keyword id="KW-0119">Carbohydrate metabolism</keyword>
<keyword id="KW-0961">Cell wall biogenesis/degradation</keyword>
<keyword id="KW-0326">Glycosidase</keyword>
<keyword id="KW-0378">Hydrolase</keyword>
<keyword id="KW-0624">Polysaccharide degradation</keyword>
<keyword id="KW-0964">Secreted</keyword>
<keyword id="KW-0732">Signal</keyword>
<reference evidence="9" key="1">
    <citation type="journal article" date="2007" name="J. Bacteriol.">
        <title>Genome sequence and analysis of the soil cellulolytic actinomycete Thermobifida fusca YX.</title>
        <authorList>
            <person name="Lykidis A."/>
            <person name="Mavromatis K."/>
            <person name="Ivanova N."/>
            <person name="Anderson I."/>
            <person name="Land M."/>
            <person name="DiBartolo G."/>
            <person name="Martinez M."/>
            <person name="Lapidus A."/>
            <person name="Lucas S."/>
            <person name="Copeland A."/>
            <person name="Richardson P."/>
            <person name="Wilson D.B."/>
            <person name="Kyrpides N."/>
        </authorList>
    </citation>
    <scope>NUCLEOTIDE SEQUENCE [LARGE SCALE GENOMIC DNA]</scope>
    <source>
        <strain evidence="9">YX</strain>
    </source>
</reference>
<reference evidence="8" key="2">
    <citation type="journal article" date="2006" name="Biochemistry">
        <title>Characterization of a Thermobifida fusca beta-1,3-glucanase (Lam81A) with a potential role in plant biomass degradation.</title>
        <authorList>
            <person name="McGrath C.E."/>
            <person name="Wilson D.B."/>
        </authorList>
    </citation>
    <scope>FUNCTION</scope>
    <scope>CATALYTIC ACTIVITY</scope>
    <scope>BIOPHYSICOCHEMICAL PROPERTIES</scope>
    <scope>SUBCELLULAR LOCATION</scope>
</reference>
<reference evidence="8" key="3">
    <citation type="journal article" date="2009" name="Protein Eng. Des. Sel.">
        <title>Site-directed mutagenesis to probe catalysis by a Thermobifida fusca beta-1,3-glucanase (Lam81A).</title>
        <authorList>
            <person name="McGrath C.E."/>
            <person name="Vuong T.V."/>
            <person name="Wilson D.B."/>
        </authorList>
    </citation>
    <scope>FUNCTION</scope>
    <scope>CATALYTIC ACTIVITY</scope>
    <scope>BIOPHYSICOCHEMICAL PROPERTIES</scope>
    <scope>SUBCELLULAR LOCATION</scope>
    <scope>ACTIVE SITE</scope>
    <scope>MUTAGENESIS OF TRP-439; ASN-456; ASP-457; HIS-458; ASP-459; PHE-460; HIS-461; TYR-462; TRP-479; GLU-534; SER-535; SER-536; SER-537 AND GLU-538</scope>
</reference>
<organism evidence="9">
    <name type="scientific">Thermobifida fusca (strain YX)</name>
    <dbReference type="NCBI Taxonomy" id="269800"/>
    <lineage>
        <taxon>Bacteria</taxon>
        <taxon>Bacillati</taxon>
        <taxon>Actinomycetota</taxon>
        <taxon>Actinomycetes</taxon>
        <taxon>Streptosporangiales</taxon>
        <taxon>Nocardiopsidaceae</taxon>
        <taxon>Thermobifida</taxon>
    </lineage>
</organism>
<dbReference type="EC" id="3.2.1.39" evidence="6"/>
<dbReference type="EMBL" id="CP000088">
    <property type="protein sequence ID" value="AAZ56163.1"/>
    <property type="molecule type" value="Genomic_DNA"/>
</dbReference>
<dbReference type="RefSeq" id="WP_011292553.1">
    <property type="nucleotide sequence ID" value="NC_007333.1"/>
</dbReference>
<dbReference type="SMR" id="Q47N06"/>
<dbReference type="STRING" id="269800.Tfu_2130"/>
<dbReference type="CAZy" id="GH81">
    <property type="family name" value="Glycoside Hydrolase Family 81"/>
</dbReference>
<dbReference type="KEGG" id="tfu:Tfu_2130"/>
<dbReference type="eggNOG" id="COG5498">
    <property type="taxonomic scope" value="Bacteria"/>
</dbReference>
<dbReference type="HOGENOM" id="CLU_005482_1_1_11"/>
<dbReference type="OrthoDB" id="5480482at2"/>
<dbReference type="GO" id="GO:0005576">
    <property type="term" value="C:extracellular region"/>
    <property type="evidence" value="ECO:0000314"/>
    <property type="project" value="UniProtKB"/>
</dbReference>
<dbReference type="GO" id="GO:0052861">
    <property type="term" value="F:endo-1,3(4)-beta-glucanase activity"/>
    <property type="evidence" value="ECO:0007669"/>
    <property type="project" value="UniProtKB-EC"/>
</dbReference>
<dbReference type="GO" id="GO:0042973">
    <property type="term" value="F:glucan endo-1,3-beta-D-glucosidase activity"/>
    <property type="evidence" value="ECO:0000314"/>
    <property type="project" value="UniProtKB"/>
</dbReference>
<dbReference type="GO" id="GO:0071555">
    <property type="term" value="P:cell wall organization"/>
    <property type="evidence" value="ECO:0007669"/>
    <property type="project" value="UniProtKB-KW"/>
</dbReference>
<dbReference type="GO" id="GO:0044347">
    <property type="term" value="P:cell wall polysaccharide catabolic process"/>
    <property type="evidence" value="ECO:0000314"/>
    <property type="project" value="UniProtKB"/>
</dbReference>
<dbReference type="GO" id="GO:0006091">
    <property type="term" value="P:generation of precursor metabolites and energy"/>
    <property type="evidence" value="ECO:0000314"/>
    <property type="project" value="UniProtKB"/>
</dbReference>
<dbReference type="Gene3D" id="2.70.98.30">
    <property type="entry name" value="Golgi alpha-mannosidase II, domain 4"/>
    <property type="match status" value="1"/>
</dbReference>
<dbReference type="InterPro" id="IPR005200">
    <property type="entry name" value="Endo-beta-glucanase"/>
</dbReference>
<dbReference type="InterPro" id="IPR040720">
    <property type="entry name" value="GH81_C"/>
</dbReference>
<dbReference type="InterPro" id="IPR040451">
    <property type="entry name" value="GH81_N"/>
</dbReference>
<dbReference type="InterPro" id="IPR006311">
    <property type="entry name" value="TAT_signal"/>
</dbReference>
<dbReference type="PANTHER" id="PTHR31983">
    <property type="entry name" value="ENDO-1,3(4)-BETA-GLUCANASE 1"/>
    <property type="match status" value="1"/>
</dbReference>
<dbReference type="PANTHER" id="PTHR31983:SF0">
    <property type="entry name" value="GLUCAN ENDO-1,3-BETA-D-GLUCOSIDASE 2"/>
    <property type="match status" value="1"/>
</dbReference>
<dbReference type="Pfam" id="PF17652">
    <property type="entry name" value="Glyco_hydro81C"/>
    <property type="match status" value="1"/>
</dbReference>
<dbReference type="Pfam" id="PF03639">
    <property type="entry name" value="Glyco_hydro_81"/>
    <property type="match status" value="1"/>
</dbReference>
<dbReference type="PROSITE" id="PS52008">
    <property type="entry name" value="GH81"/>
    <property type="match status" value="1"/>
</dbReference>
<dbReference type="PROSITE" id="PS51318">
    <property type="entry name" value="TAT"/>
    <property type="match status" value="1"/>
</dbReference>
<name>ENG1_THEFY</name>
<protein>
    <recommendedName>
        <fullName evidence="8">Glucan endo-1,3-beta-D-glucosidase</fullName>
        <shortName evidence="8">Endo-1,3-beta-glucanase</shortName>
        <ecNumber evidence="6">3.2.1.39</ecNumber>
    </recommendedName>
    <alternativeName>
        <fullName evidence="8">Laminarinase</fullName>
    </alternativeName>
</protein>
<feature type="signal peptide" description="Tat-type signal" evidence="3">
    <location>
        <begin position="1"/>
        <end position="34"/>
    </location>
</feature>
<feature type="chain" id="PRO_5004233724" description="Glucan endo-1,3-beta-D-glucosidase" evidence="2 3">
    <location>
        <begin position="35"/>
        <end position="758"/>
    </location>
</feature>
<feature type="domain" description="GH81" evidence="4">
    <location>
        <begin position="38"/>
        <end position="704"/>
    </location>
</feature>
<feature type="region of interest" description="beta-sandwich subdomain" evidence="4">
    <location>
        <begin position="38"/>
        <end position="251"/>
    </location>
</feature>
<feature type="region of interest" description="alpha/beta subdomain" evidence="4">
    <location>
        <begin position="252"/>
        <end position="342"/>
    </location>
</feature>
<feature type="region of interest" description="(alpha/beta)6 barrel subdomain" evidence="4">
    <location>
        <begin position="352"/>
        <end position="704"/>
    </location>
</feature>
<feature type="active site" evidence="4">
    <location>
        <position position="457"/>
    </location>
</feature>
<feature type="active site" evidence="4 6">
    <location>
        <position position="534"/>
    </location>
</feature>
<feature type="active site" evidence="4">
    <location>
        <position position="538"/>
    </location>
</feature>
<feature type="binding site" evidence="1">
    <location>
        <position position="382"/>
    </location>
    <ligand>
        <name>(1,3-beta-D-glucosyl)n</name>
        <dbReference type="ChEBI" id="CHEBI:37671"/>
    </ligand>
</feature>
<feature type="binding site" evidence="1">
    <location>
        <position position="386"/>
    </location>
    <ligand>
        <name>(1,3-beta-D-glucosyl)n</name>
        <dbReference type="ChEBI" id="CHEBI:37671"/>
    </ligand>
</feature>
<feature type="binding site" evidence="1">
    <location>
        <position position="457"/>
    </location>
    <ligand>
        <name>(1,3-beta-D-glucosyl)n</name>
        <dbReference type="ChEBI" id="CHEBI:37671"/>
    </ligand>
</feature>
<feature type="binding site" evidence="1">
    <location>
        <position position="461"/>
    </location>
    <ligand>
        <name>(1,3-beta-D-glucosyl)n</name>
        <dbReference type="ChEBI" id="CHEBI:37671"/>
    </ligand>
</feature>
<feature type="binding site" evidence="1">
    <location>
        <position position="532"/>
    </location>
    <ligand>
        <name>(1,3-beta-D-glucosyl)n</name>
        <dbReference type="ChEBI" id="CHEBI:37671"/>
    </ligand>
</feature>
<feature type="binding site" evidence="1">
    <location>
        <position position="534"/>
    </location>
    <ligand>
        <name>(1,3-beta-D-glucosyl)n</name>
        <dbReference type="ChEBI" id="CHEBI:37671"/>
    </ligand>
</feature>
<feature type="binding site" evidence="1">
    <location>
        <position position="538"/>
    </location>
    <ligand>
        <name>(1,3-beta-D-glucosyl)n</name>
        <dbReference type="ChEBI" id="CHEBI:37671"/>
    </ligand>
</feature>
<feature type="mutagenesis site" description="Decreases enzyme activity on laminarin but not 1,3;1,4-mixed linkage glucan." evidence="6">
    <original>W</original>
    <variation>A</variation>
    <location>
        <position position="439"/>
    </location>
</feature>
<feature type="mutagenesis site" description="Decreases enzyme activity." evidence="6">
    <original>N</original>
    <variation>A</variation>
    <location>
        <position position="456"/>
    </location>
</feature>
<feature type="mutagenesis site" description="Loss of enzyme activity." evidence="6">
    <original>D</original>
    <variation>A</variation>
    <location>
        <position position="457"/>
    </location>
</feature>
<feature type="mutagenesis site" description="Decreases enzyme activity." evidence="6">
    <original>D</original>
    <variation>E</variation>
    <location>
        <position position="457"/>
    </location>
</feature>
<feature type="mutagenesis site" description="Decreases enzyme activity." evidence="6">
    <original>H</original>
    <variation>A</variation>
    <location>
        <position position="458"/>
    </location>
</feature>
<feature type="mutagenesis site" description="Decreases enzyme activity." evidence="6">
    <original>D</original>
    <variation>A</variation>
    <location>
        <position position="459"/>
    </location>
</feature>
<feature type="mutagenesis site" description="Increases enzyme activity." evidence="6">
    <original>D</original>
    <variation>H</variation>
    <location>
        <position position="459"/>
    </location>
</feature>
<feature type="mutagenesis site" description="Severely decreases enzyme activity." evidence="6">
    <original>F</original>
    <variation>A</variation>
    <location>
        <position position="460"/>
    </location>
</feature>
<feature type="mutagenesis site" description="Increases enzyme activity on laminarin and insoluble 1,3-beta-glucan, but not 1,3;1,4-mixed linkage glucan." evidence="6">
    <original>F</original>
    <variation>Y</variation>
    <location>
        <position position="460"/>
    </location>
</feature>
<feature type="mutagenesis site" description="Decreases enzyme activity." evidence="6">
    <original>H</original>
    <variation>A</variation>
    <location>
        <position position="461"/>
    </location>
</feature>
<feature type="mutagenesis site" description="Increases activity on insoluble 1,3-beta-glucan." evidence="6">
    <original>Y</original>
    <variation>A</variation>
    <location>
        <position position="462"/>
    </location>
</feature>
<feature type="mutagenesis site" description="Decreases enzyme activity on laminarin but not 1,3;1,4-mixed linkage glucan." evidence="6">
    <original>W</original>
    <variation>A</variation>
    <location>
        <position position="479"/>
    </location>
</feature>
<feature type="mutagenesis site" description="Severely decreases enzyme activity." evidence="6">
    <original>E</original>
    <variation>A</variation>
    <location>
        <position position="534"/>
    </location>
</feature>
<feature type="mutagenesis site" description="Severely decreases enzyme activity." evidence="6">
    <original>E</original>
    <variation>D</variation>
    <location>
        <position position="534"/>
    </location>
</feature>
<feature type="mutagenesis site" description="Increases enzyme activity on laminarin but not 1,3;1,4-mixed linkage glucan." evidence="6">
    <original>S</original>
    <variation>A</variation>
    <location>
        <position position="535"/>
    </location>
</feature>
<feature type="mutagenesis site" description="Increases enzyme activity on laminarin but not 1,3;1,4-mixed linkage glucan." evidence="6">
    <original>S</original>
    <variation>A</variation>
    <location>
        <position position="536"/>
    </location>
</feature>
<feature type="mutagenesis site" description="Increases enzyme activity on laminarin but not 1,3;1,4-mixed linkage glucan." evidence="6">
    <original>S</original>
    <variation>A</variation>
    <location>
        <position position="537"/>
    </location>
</feature>
<feature type="mutagenesis site" description="Severely decreases enzyme activity." evidence="6">
    <original>E</original>
    <variation>A</variation>
    <location>
        <position position="538"/>
    </location>
</feature>
<feature type="mutagenesis site" description="Decreases enzyme activity." evidence="6">
    <original>E</original>
    <variation>D</variation>
    <location>
        <position position="538"/>
    </location>
</feature>
<comment type="function">
    <text evidence="5 6">Cleaves internal linkages in 1,3-beta-glucan (PubMed:17115704, PubMed:19435780). May contribute to biomass degradation by hydrolyzing the 1,3-beta-linked plant polymer callose that is present in decomposing plant tissue (PubMed:17115704).</text>
</comment>
<comment type="catalytic activity">
    <reaction evidence="5 6">
        <text>Hydrolysis of (1-&gt;3)-beta-D-glucosidic linkages in (1-&gt;3)-beta-D-glucans.</text>
        <dbReference type="EC" id="3.2.1.39"/>
    </reaction>
</comment>
<comment type="biophysicochemical properties">
    <kinetics>
        <KM evidence="6">11 uM for laminarin (at 28 degrees Celsius and pH 6.8)</KM>
        <KM evidence="5">13.7 uM for laminarin (at 50 degrees Celsius and pH 6.8)</KM>
    </kinetics>
    <temperatureDependence>
        <text evidence="5">Optimum temperature is 50 degrees Celsius.</text>
    </temperatureDependence>
</comment>
<comment type="subcellular location">
    <subcellularLocation>
        <location evidence="5 6">Secreted</location>
    </subcellularLocation>
</comment>
<comment type="PTM">
    <text evidence="3">Predicted to be exported by the Tat system. The position of the signal peptide cleavage has not been experimentally proven.</text>
</comment>
<comment type="similarity">
    <text evidence="4 8">Belongs to the glycosyl hydrolase 81 family.</text>
</comment>